<keyword id="KW-0378">Hydrolase</keyword>
<keyword id="KW-0460">Magnesium</keyword>
<comment type="function">
    <text evidence="1">Catalyzes the hydrolysis of nucleoside triphosphates, with a preference for pyrimidine deoxynucleoside triphosphates (dUTP, dTTP and dCTP).</text>
</comment>
<comment type="catalytic activity">
    <reaction evidence="1">
        <text>a ribonucleoside 5'-triphosphate + H2O = a ribonucleoside 5'-phosphate + diphosphate + H(+)</text>
        <dbReference type="Rhea" id="RHEA:23996"/>
        <dbReference type="ChEBI" id="CHEBI:15377"/>
        <dbReference type="ChEBI" id="CHEBI:15378"/>
        <dbReference type="ChEBI" id="CHEBI:33019"/>
        <dbReference type="ChEBI" id="CHEBI:58043"/>
        <dbReference type="ChEBI" id="CHEBI:61557"/>
        <dbReference type="EC" id="3.6.1.9"/>
    </reaction>
</comment>
<comment type="catalytic activity">
    <reaction evidence="1">
        <text>a 2'-deoxyribonucleoside 5'-triphosphate + H2O = a 2'-deoxyribonucleoside 5'-phosphate + diphosphate + H(+)</text>
        <dbReference type="Rhea" id="RHEA:44644"/>
        <dbReference type="ChEBI" id="CHEBI:15377"/>
        <dbReference type="ChEBI" id="CHEBI:15378"/>
        <dbReference type="ChEBI" id="CHEBI:33019"/>
        <dbReference type="ChEBI" id="CHEBI:61560"/>
        <dbReference type="ChEBI" id="CHEBI:65317"/>
        <dbReference type="EC" id="3.6.1.9"/>
    </reaction>
</comment>
<comment type="catalytic activity">
    <reaction evidence="1">
        <text>dUTP + H2O = dUMP + diphosphate + H(+)</text>
        <dbReference type="Rhea" id="RHEA:10248"/>
        <dbReference type="ChEBI" id="CHEBI:15377"/>
        <dbReference type="ChEBI" id="CHEBI:15378"/>
        <dbReference type="ChEBI" id="CHEBI:33019"/>
        <dbReference type="ChEBI" id="CHEBI:61555"/>
        <dbReference type="ChEBI" id="CHEBI:246422"/>
        <dbReference type="EC" id="3.6.1.9"/>
    </reaction>
</comment>
<comment type="catalytic activity">
    <reaction evidence="1">
        <text>dUTP + H2O = dUMP + diphosphate + H(+)</text>
        <dbReference type="Rhea" id="RHEA:10248"/>
        <dbReference type="ChEBI" id="CHEBI:15377"/>
        <dbReference type="ChEBI" id="CHEBI:15378"/>
        <dbReference type="ChEBI" id="CHEBI:33019"/>
        <dbReference type="ChEBI" id="CHEBI:61555"/>
        <dbReference type="ChEBI" id="CHEBI:246422"/>
        <dbReference type="EC" id="3.6.1.23"/>
    </reaction>
</comment>
<comment type="catalytic activity">
    <reaction evidence="1">
        <text>dTTP + H2O = dTMP + diphosphate + H(+)</text>
        <dbReference type="Rhea" id="RHEA:28534"/>
        <dbReference type="ChEBI" id="CHEBI:15377"/>
        <dbReference type="ChEBI" id="CHEBI:15378"/>
        <dbReference type="ChEBI" id="CHEBI:33019"/>
        <dbReference type="ChEBI" id="CHEBI:37568"/>
        <dbReference type="ChEBI" id="CHEBI:63528"/>
        <dbReference type="EC" id="3.6.1.9"/>
    </reaction>
</comment>
<comment type="catalytic activity">
    <reaction evidence="1">
        <text>dCTP + H2O = dCMP + diphosphate + H(+)</text>
        <dbReference type="Rhea" id="RHEA:22636"/>
        <dbReference type="ChEBI" id="CHEBI:15377"/>
        <dbReference type="ChEBI" id="CHEBI:15378"/>
        <dbReference type="ChEBI" id="CHEBI:33019"/>
        <dbReference type="ChEBI" id="CHEBI:57566"/>
        <dbReference type="ChEBI" id="CHEBI:61481"/>
        <dbReference type="EC" id="3.6.1.9"/>
    </reaction>
</comment>
<comment type="catalytic activity">
    <reaction evidence="1">
        <text>dCTP + H2O = dCMP + diphosphate + H(+)</text>
        <dbReference type="Rhea" id="RHEA:22636"/>
        <dbReference type="ChEBI" id="CHEBI:15377"/>
        <dbReference type="ChEBI" id="CHEBI:15378"/>
        <dbReference type="ChEBI" id="CHEBI:33019"/>
        <dbReference type="ChEBI" id="CHEBI:57566"/>
        <dbReference type="ChEBI" id="CHEBI:61481"/>
        <dbReference type="EC" id="3.6.1.12"/>
    </reaction>
</comment>
<comment type="cofactor">
    <cofactor evidence="1">
        <name>Mg(2+)</name>
        <dbReference type="ChEBI" id="CHEBI:18420"/>
    </cofactor>
</comment>
<comment type="subunit">
    <text evidence="1">Monomer.</text>
</comment>
<comment type="similarity">
    <text evidence="1">Belongs to the Nudix hydrolase family. NudI subfamily.</text>
</comment>
<dbReference type="EC" id="3.6.1.9" evidence="1"/>
<dbReference type="EC" id="3.6.1.12" evidence="1"/>
<dbReference type="EC" id="3.6.1.-" evidence="1"/>
<dbReference type="EC" id="3.6.1.23" evidence="1"/>
<dbReference type="EMBL" id="CP000857">
    <property type="protein sequence ID" value="ACN45577.1"/>
    <property type="molecule type" value="Genomic_DNA"/>
</dbReference>
<dbReference type="RefSeq" id="WP_001249902.1">
    <property type="nucleotide sequence ID" value="NC_012125.1"/>
</dbReference>
<dbReference type="SMR" id="C0Q073"/>
<dbReference type="KEGG" id="sei:SPC_1416"/>
<dbReference type="HOGENOM" id="CLU_037162_31_0_6"/>
<dbReference type="Proteomes" id="UP000001599">
    <property type="component" value="Chromosome"/>
</dbReference>
<dbReference type="GO" id="GO:0047840">
    <property type="term" value="F:dCTP diphosphatase activity"/>
    <property type="evidence" value="ECO:0007669"/>
    <property type="project" value="UniProtKB-EC"/>
</dbReference>
<dbReference type="GO" id="GO:0036218">
    <property type="term" value="F:dTTP diphosphatase activity"/>
    <property type="evidence" value="ECO:0007669"/>
    <property type="project" value="RHEA"/>
</dbReference>
<dbReference type="GO" id="GO:0004170">
    <property type="term" value="F:dUTP diphosphatase activity"/>
    <property type="evidence" value="ECO:0007669"/>
    <property type="project" value="UniProtKB-EC"/>
</dbReference>
<dbReference type="GO" id="GO:0000287">
    <property type="term" value="F:magnesium ion binding"/>
    <property type="evidence" value="ECO:0007669"/>
    <property type="project" value="UniProtKB-UniRule"/>
</dbReference>
<dbReference type="CDD" id="cd04696">
    <property type="entry name" value="NUDIX_NudI"/>
    <property type="match status" value="1"/>
</dbReference>
<dbReference type="Gene3D" id="3.90.79.10">
    <property type="entry name" value="Nucleoside Triphosphate Pyrophosphohydrolase"/>
    <property type="match status" value="1"/>
</dbReference>
<dbReference type="HAMAP" id="MF_01846">
    <property type="entry name" value="Nudix_NudI"/>
    <property type="match status" value="1"/>
</dbReference>
<dbReference type="InterPro" id="IPR023781">
    <property type="entry name" value="Nucleoside_triphosphatase_NudI"/>
</dbReference>
<dbReference type="InterPro" id="IPR020476">
    <property type="entry name" value="Nudix_hydrolase"/>
</dbReference>
<dbReference type="InterPro" id="IPR015797">
    <property type="entry name" value="NUDIX_hydrolase-like_dom_sf"/>
</dbReference>
<dbReference type="InterPro" id="IPR020084">
    <property type="entry name" value="NUDIX_hydrolase_CS"/>
</dbReference>
<dbReference type="InterPro" id="IPR000086">
    <property type="entry name" value="NUDIX_hydrolase_dom"/>
</dbReference>
<dbReference type="NCBIfam" id="NF012016">
    <property type="entry name" value="PRK15472.1"/>
    <property type="match status" value="1"/>
</dbReference>
<dbReference type="PANTHER" id="PTHR43046">
    <property type="entry name" value="GDP-MANNOSE MANNOSYL HYDROLASE"/>
    <property type="match status" value="1"/>
</dbReference>
<dbReference type="PANTHER" id="PTHR43046:SF14">
    <property type="entry name" value="MUTT_NUDIX FAMILY PROTEIN"/>
    <property type="match status" value="1"/>
</dbReference>
<dbReference type="Pfam" id="PF00293">
    <property type="entry name" value="NUDIX"/>
    <property type="match status" value="1"/>
</dbReference>
<dbReference type="PRINTS" id="PR00502">
    <property type="entry name" value="NUDIXFAMILY"/>
</dbReference>
<dbReference type="SUPFAM" id="SSF55811">
    <property type="entry name" value="Nudix"/>
    <property type="match status" value="1"/>
</dbReference>
<dbReference type="PROSITE" id="PS51462">
    <property type="entry name" value="NUDIX"/>
    <property type="match status" value="1"/>
</dbReference>
<dbReference type="PROSITE" id="PS00893">
    <property type="entry name" value="NUDIX_BOX"/>
    <property type="match status" value="1"/>
</dbReference>
<reference key="1">
    <citation type="journal article" date="2009" name="PLoS ONE">
        <title>Salmonella paratyphi C: genetic divergence from Salmonella choleraesuis and pathogenic convergence with Salmonella typhi.</title>
        <authorList>
            <person name="Liu W.-Q."/>
            <person name="Feng Y."/>
            <person name="Wang Y."/>
            <person name="Zou Q.-H."/>
            <person name="Chen F."/>
            <person name="Guo J.-T."/>
            <person name="Peng Y.-H."/>
            <person name="Jin Y."/>
            <person name="Li Y.-G."/>
            <person name="Hu S.-N."/>
            <person name="Johnston R.N."/>
            <person name="Liu G.-R."/>
            <person name="Liu S.-L."/>
        </authorList>
    </citation>
    <scope>NUCLEOTIDE SEQUENCE [LARGE SCALE GENOMIC DNA]</scope>
    <source>
        <strain>RKS4594</strain>
    </source>
</reference>
<gene>
    <name evidence="1" type="primary">nudI</name>
    <name type="ordered locus">SPC_1416</name>
</gene>
<feature type="chain" id="PRO_1000188492" description="Nucleoside triphosphatase NudI">
    <location>
        <begin position="1"/>
        <end position="141"/>
    </location>
</feature>
<feature type="domain" description="Nudix hydrolase" evidence="1">
    <location>
        <begin position="1"/>
        <end position="141"/>
    </location>
</feature>
<feature type="short sequence motif" description="Nudix box">
    <location>
        <begin position="38"/>
        <end position="59"/>
    </location>
</feature>
<name>NUDI_SALPC</name>
<proteinExistence type="inferred from homology"/>
<accession>C0Q073</accession>
<organism>
    <name type="scientific">Salmonella paratyphi C (strain RKS4594)</name>
    <dbReference type="NCBI Taxonomy" id="476213"/>
    <lineage>
        <taxon>Bacteria</taxon>
        <taxon>Pseudomonadati</taxon>
        <taxon>Pseudomonadota</taxon>
        <taxon>Gammaproteobacteria</taxon>
        <taxon>Enterobacterales</taxon>
        <taxon>Enterobacteriaceae</taxon>
        <taxon>Salmonella</taxon>
    </lineage>
</organism>
<protein>
    <recommendedName>
        <fullName evidence="1">Nucleoside triphosphatase NudI</fullName>
        <ecNumber evidence="1">3.6.1.9</ecNumber>
    </recommendedName>
    <alternativeName>
        <fullName evidence="1">Nucleotide diphosphatase NudI</fullName>
    </alternativeName>
    <alternativeName>
        <fullName evidence="1">Pyrimidine deoxynucleoside triphosphate diphosphatase</fullName>
    </alternativeName>
    <alternativeName>
        <fullName evidence="1">dCTP diphosphatase</fullName>
        <ecNumber evidence="1">3.6.1.12</ecNumber>
    </alternativeName>
    <alternativeName>
        <fullName evidence="1">dTTP diphosphatase</fullName>
        <ecNumber evidence="1">3.6.1.-</ecNumber>
    </alternativeName>
    <alternativeName>
        <fullName evidence="1">dUTP diphosphatase</fullName>
        <ecNumber evidence="1">3.6.1.23</ecNumber>
    </alternativeName>
</protein>
<sequence length="141" mass="16288">MRQRTIVCPLIQNDGCYLLCKMADNRGVFPGQWALSGGGVEPGERIEEALRREIREELGEQLILSDITPWTFRDDIRVKTYADGRQEEIYMIYLIFDCVSANRDICINDEFQDYAWVKPEELALYDLNVATRHTLALKGLL</sequence>
<evidence type="ECO:0000255" key="1">
    <source>
        <dbReference type="HAMAP-Rule" id="MF_01846"/>
    </source>
</evidence>